<sequence>MRDFDFSFNHKACEGCGAKCCVGESGYIFVTIQEMQQISAFLKLELEEFSQKYVKKVGYKFSLLEKDAKDLGLACVFLDLETKKCQIYSARPKQCQTFPFWESVKTFSKEQKEAFCQSCPGITQKTKETKVR</sequence>
<organism>
    <name type="scientific">Helicobacter pylori (strain J99 / ATCC 700824)</name>
    <name type="common">Campylobacter pylori J99</name>
    <dbReference type="NCBI Taxonomy" id="85963"/>
    <lineage>
        <taxon>Bacteria</taxon>
        <taxon>Pseudomonadati</taxon>
        <taxon>Campylobacterota</taxon>
        <taxon>Epsilonproteobacteria</taxon>
        <taxon>Campylobacterales</taxon>
        <taxon>Helicobacteraceae</taxon>
        <taxon>Helicobacter</taxon>
    </lineage>
</organism>
<proteinExistence type="predicted"/>
<feature type="chain" id="PRO_0000128682" description="Uncharacterized protein jhp_0259">
    <location>
        <begin position="1"/>
        <end position="132"/>
    </location>
</feature>
<name>Y274_HELPJ</name>
<reference key="1">
    <citation type="journal article" date="1999" name="Nature">
        <title>Genomic sequence comparison of two unrelated isolates of the human gastric pathogen Helicobacter pylori.</title>
        <authorList>
            <person name="Alm R.A."/>
            <person name="Ling L.-S.L."/>
            <person name="Moir D.T."/>
            <person name="King B.L."/>
            <person name="Brown E.D."/>
            <person name="Doig P.C."/>
            <person name="Smith D.R."/>
            <person name="Noonan B."/>
            <person name="Guild B.C."/>
            <person name="deJonge B.L."/>
            <person name="Carmel G."/>
            <person name="Tummino P.J."/>
            <person name="Caruso A."/>
            <person name="Uria-Nickelsen M."/>
            <person name="Mills D.M."/>
            <person name="Ives C."/>
            <person name="Gibson R."/>
            <person name="Merberg D."/>
            <person name="Mills S.D."/>
            <person name="Jiang Q."/>
            <person name="Taylor D.E."/>
            <person name="Vovis G.F."/>
            <person name="Trust T.J."/>
        </authorList>
    </citation>
    <scope>NUCLEOTIDE SEQUENCE [LARGE SCALE GENOMIC DNA]</scope>
    <source>
        <strain>J99 / ATCC 700824</strain>
    </source>
</reference>
<protein>
    <recommendedName>
        <fullName>Uncharacterized protein jhp_0259</fullName>
    </recommendedName>
</protein>
<comment type="similarity">
    <text evidence="1">To M.jannaschii MJ0661.</text>
</comment>
<evidence type="ECO:0000305" key="1"/>
<gene>
    <name type="ordered locus">jhp_0259</name>
</gene>
<dbReference type="EMBL" id="AE001439">
    <property type="protein sequence ID" value="AAD05838.1"/>
    <property type="molecule type" value="Genomic_DNA"/>
</dbReference>
<dbReference type="PIR" id="B71954">
    <property type="entry name" value="B71954"/>
</dbReference>
<dbReference type="RefSeq" id="WP_001204150.1">
    <property type="nucleotide sequence ID" value="NZ_CP011330.1"/>
</dbReference>
<dbReference type="KEGG" id="hpj:jhp_0259"/>
<dbReference type="PATRIC" id="fig|85963.30.peg.755"/>
<dbReference type="eggNOG" id="COG0727">
    <property type="taxonomic scope" value="Bacteria"/>
</dbReference>
<dbReference type="Proteomes" id="UP000000804">
    <property type="component" value="Chromosome"/>
</dbReference>
<dbReference type="InterPro" id="IPR005358">
    <property type="entry name" value="Puta_zinc/iron-chelating_dom"/>
</dbReference>
<dbReference type="PANTHER" id="PTHR35866">
    <property type="entry name" value="PUTATIVE-RELATED"/>
    <property type="match status" value="1"/>
</dbReference>
<dbReference type="PANTHER" id="PTHR35866:SF1">
    <property type="entry name" value="YKGJ FAMILY CYSTEINE CLUSTER PROTEIN"/>
    <property type="match status" value="1"/>
</dbReference>
<dbReference type="Pfam" id="PF03692">
    <property type="entry name" value="CxxCxxCC"/>
    <property type="match status" value="1"/>
</dbReference>
<accession>Q9ZMG1</accession>